<reference key="1">
    <citation type="journal article" date="2007" name="J. Bacteriol.">
        <title>Genome of the opportunistic pathogen Streptococcus sanguinis.</title>
        <authorList>
            <person name="Xu P."/>
            <person name="Alves J.M."/>
            <person name="Kitten T."/>
            <person name="Brown A."/>
            <person name="Chen Z."/>
            <person name="Ozaki L.S."/>
            <person name="Manque P."/>
            <person name="Ge X."/>
            <person name="Serrano M.G."/>
            <person name="Puiu D."/>
            <person name="Hendricks S."/>
            <person name="Wang Y."/>
            <person name="Chaplin M.D."/>
            <person name="Akan D."/>
            <person name="Paik S."/>
            <person name="Peterson D.L."/>
            <person name="Macrina F.L."/>
            <person name="Buck G.A."/>
        </authorList>
    </citation>
    <scope>NUCLEOTIDE SEQUENCE [LARGE SCALE GENOMIC DNA]</scope>
    <source>
        <strain>SK36</strain>
    </source>
</reference>
<proteinExistence type="inferred from homology"/>
<protein>
    <recommendedName>
        <fullName evidence="1">HPr kinase/phosphorylase</fullName>
        <shortName evidence="1">HPrK/P</shortName>
        <ecNumber evidence="1">2.7.11.-</ecNumber>
        <ecNumber evidence="1">2.7.4.-</ecNumber>
    </recommendedName>
    <alternativeName>
        <fullName evidence="1">HPr(Ser) kinase/phosphorylase</fullName>
    </alternativeName>
</protein>
<gene>
    <name evidence="1" type="primary">hprK</name>
    <name type="ordered locus">SSA_1547</name>
</gene>
<feature type="chain" id="PRO_1000067177" description="HPr kinase/phosphorylase">
    <location>
        <begin position="1"/>
        <end position="311"/>
    </location>
</feature>
<feature type="region of interest" description="Important for the catalytic mechanism of both phosphorylation and dephosphorylation" evidence="1">
    <location>
        <begin position="201"/>
        <end position="210"/>
    </location>
</feature>
<feature type="region of interest" description="Important for the catalytic mechanism of dephosphorylation" evidence="1">
    <location>
        <begin position="264"/>
        <end position="269"/>
    </location>
</feature>
<feature type="active site" evidence="1">
    <location>
        <position position="138"/>
    </location>
</feature>
<feature type="active site" evidence="1">
    <location>
        <position position="159"/>
    </location>
</feature>
<feature type="active site" description="Proton acceptor; for phosphorylation activity. Proton donor; for dephosphorylation activity" evidence="1">
    <location>
        <position position="177"/>
    </location>
</feature>
<feature type="active site" evidence="1">
    <location>
        <position position="243"/>
    </location>
</feature>
<feature type="binding site" evidence="1">
    <location>
        <begin position="153"/>
        <end position="160"/>
    </location>
    <ligand>
        <name>ATP</name>
        <dbReference type="ChEBI" id="CHEBI:30616"/>
    </ligand>
</feature>
<feature type="binding site" evidence="1">
    <location>
        <position position="160"/>
    </location>
    <ligand>
        <name>Mg(2+)</name>
        <dbReference type="ChEBI" id="CHEBI:18420"/>
    </ligand>
</feature>
<feature type="binding site" evidence="1">
    <location>
        <position position="202"/>
    </location>
    <ligand>
        <name>Mg(2+)</name>
        <dbReference type="ChEBI" id="CHEBI:18420"/>
    </ligand>
</feature>
<organism>
    <name type="scientific">Streptococcus sanguinis (strain SK36)</name>
    <dbReference type="NCBI Taxonomy" id="388919"/>
    <lineage>
        <taxon>Bacteria</taxon>
        <taxon>Bacillati</taxon>
        <taxon>Bacillota</taxon>
        <taxon>Bacilli</taxon>
        <taxon>Lactobacillales</taxon>
        <taxon>Streptococcaceae</taxon>
        <taxon>Streptococcus</taxon>
    </lineage>
</organism>
<evidence type="ECO:0000255" key="1">
    <source>
        <dbReference type="HAMAP-Rule" id="MF_01249"/>
    </source>
</evidence>
<name>HPRK_STRSV</name>
<accession>A3CP33</accession>
<comment type="function">
    <text evidence="1">Catalyzes the ATP- as well as the pyrophosphate-dependent phosphorylation of a specific serine residue in HPr, a phosphocarrier protein of the phosphoenolpyruvate-dependent sugar phosphotransferase system (PTS). HprK/P also catalyzes the pyrophosphate-producing, inorganic phosphate-dependent dephosphorylation (phosphorolysis) of seryl-phosphorylated HPr (P-Ser-HPr). The two antagonistic activities of HprK/P are regulated by several intracellular metabolites, which change their concentration in response to the absence or presence of rapidly metabolisable carbon sources (glucose, fructose, etc.) in the growth medium. Therefore, by controlling the phosphorylation state of HPr, HPrK/P is a sensor enzyme that plays a major role in the regulation of carbon metabolism and sugar transport: it mediates carbon catabolite repression (CCR), and regulates PTS-catalyzed carbohydrate uptake and inducer exclusion.</text>
</comment>
<comment type="catalytic activity">
    <reaction evidence="1">
        <text>[HPr protein]-L-serine + ATP = [HPr protein]-O-phospho-L-serine + ADP + H(+)</text>
        <dbReference type="Rhea" id="RHEA:46600"/>
        <dbReference type="Rhea" id="RHEA-COMP:11602"/>
        <dbReference type="Rhea" id="RHEA-COMP:11603"/>
        <dbReference type="ChEBI" id="CHEBI:15378"/>
        <dbReference type="ChEBI" id="CHEBI:29999"/>
        <dbReference type="ChEBI" id="CHEBI:30616"/>
        <dbReference type="ChEBI" id="CHEBI:83421"/>
        <dbReference type="ChEBI" id="CHEBI:456216"/>
    </reaction>
</comment>
<comment type="catalytic activity">
    <reaction evidence="1">
        <text>[HPr protein]-O-phospho-L-serine + phosphate + H(+) = [HPr protein]-L-serine + diphosphate</text>
        <dbReference type="Rhea" id="RHEA:46604"/>
        <dbReference type="Rhea" id="RHEA-COMP:11602"/>
        <dbReference type="Rhea" id="RHEA-COMP:11603"/>
        <dbReference type="ChEBI" id="CHEBI:15378"/>
        <dbReference type="ChEBI" id="CHEBI:29999"/>
        <dbReference type="ChEBI" id="CHEBI:33019"/>
        <dbReference type="ChEBI" id="CHEBI:43474"/>
        <dbReference type="ChEBI" id="CHEBI:83421"/>
    </reaction>
</comment>
<comment type="cofactor">
    <cofactor evidence="1">
        <name>Mg(2+)</name>
        <dbReference type="ChEBI" id="CHEBI:18420"/>
    </cofactor>
</comment>
<comment type="subunit">
    <text evidence="1">Homohexamer.</text>
</comment>
<comment type="domain">
    <text evidence="1">The Walker A ATP-binding motif also binds Pi and PPi.</text>
</comment>
<comment type="miscellaneous">
    <text evidence="1">Both phosphorylation and phosphorolysis are carried out by the same active site and suggest a common mechanism for both reactions.</text>
</comment>
<comment type="similarity">
    <text evidence="1">Belongs to the HPrK/P family.</text>
</comment>
<keyword id="KW-0067">ATP-binding</keyword>
<keyword id="KW-0119">Carbohydrate metabolism</keyword>
<keyword id="KW-0418">Kinase</keyword>
<keyword id="KW-0460">Magnesium</keyword>
<keyword id="KW-0479">Metal-binding</keyword>
<keyword id="KW-0511">Multifunctional enzyme</keyword>
<keyword id="KW-0547">Nucleotide-binding</keyword>
<keyword id="KW-1185">Reference proteome</keyword>
<keyword id="KW-0723">Serine/threonine-protein kinase</keyword>
<keyword id="KW-0808">Transferase</keyword>
<sequence length="311" mass="35169">MSVKVKDLLKMSRLSQEYGDKVLLEKEIKTSDISRPGLEMTGYFDFYTPERIQLIGMKEWSYLMKMSSHNRHQVLLKMFQPETPVVIIARNLEIPKEMIDAADEKQVAILRSKASTSRLSGEISSYLDSRLAERTSVHGVLMDIYGMGVLIQGDSGIGKSETGLELVKRGHRLVADDRVDIYAKDEVTLWGEPAEILRHLLEIRGVGIIDVMSLYGASAVKDSSQVQIAVYLENYDTQKTFDRLGNDTEELEVAGVRIPRIRIPVKTGRNISVVIEAAAMNYRAKQMGYDATKIFEERLTDLISRNEVKHD</sequence>
<dbReference type="EC" id="2.7.11.-" evidence="1"/>
<dbReference type="EC" id="2.7.4.-" evidence="1"/>
<dbReference type="EMBL" id="CP000387">
    <property type="protein sequence ID" value="ABN44938.1"/>
    <property type="molecule type" value="Genomic_DNA"/>
</dbReference>
<dbReference type="RefSeq" id="WP_002894971.1">
    <property type="nucleotide sequence ID" value="NZ_CAXTYR010000001.1"/>
</dbReference>
<dbReference type="RefSeq" id="YP_001035488.1">
    <property type="nucleotide sequence ID" value="NC_009009.1"/>
</dbReference>
<dbReference type="SMR" id="A3CP33"/>
<dbReference type="STRING" id="388919.SSA_1547"/>
<dbReference type="GeneID" id="48425920"/>
<dbReference type="KEGG" id="ssa:SSA_1547"/>
<dbReference type="PATRIC" id="fig|388919.9.peg.1468"/>
<dbReference type="eggNOG" id="COG1493">
    <property type="taxonomic scope" value="Bacteria"/>
</dbReference>
<dbReference type="HOGENOM" id="CLU_052030_0_1_9"/>
<dbReference type="OrthoDB" id="9778803at2"/>
<dbReference type="Proteomes" id="UP000002148">
    <property type="component" value="Chromosome"/>
</dbReference>
<dbReference type="GO" id="GO:0005524">
    <property type="term" value="F:ATP binding"/>
    <property type="evidence" value="ECO:0007669"/>
    <property type="project" value="UniProtKB-UniRule"/>
</dbReference>
<dbReference type="GO" id="GO:0000287">
    <property type="term" value="F:magnesium ion binding"/>
    <property type="evidence" value="ECO:0007669"/>
    <property type="project" value="UniProtKB-UniRule"/>
</dbReference>
<dbReference type="GO" id="GO:0000155">
    <property type="term" value="F:phosphorelay sensor kinase activity"/>
    <property type="evidence" value="ECO:0007669"/>
    <property type="project" value="InterPro"/>
</dbReference>
<dbReference type="GO" id="GO:0004674">
    <property type="term" value="F:protein serine/threonine kinase activity"/>
    <property type="evidence" value="ECO:0007669"/>
    <property type="project" value="UniProtKB-KW"/>
</dbReference>
<dbReference type="GO" id="GO:0004712">
    <property type="term" value="F:protein serine/threonine/tyrosine kinase activity"/>
    <property type="evidence" value="ECO:0007669"/>
    <property type="project" value="UniProtKB-UniRule"/>
</dbReference>
<dbReference type="GO" id="GO:0006109">
    <property type="term" value="P:regulation of carbohydrate metabolic process"/>
    <property type="evidence" value="ECO:0007669"/>
    <property type="project" value="UniProtKB-UniRule"/>
</dbReference>
<dbReference type="CDD" id="cd01918">
    <property type="entry name" value="HprK_C"/>
    <property type="match status" value="1"/>
</dbReference>
<dbReference type="FunFam" id="3.40.50.300:FF:000174">
    <property type="entry name" value="HPr kinase/phosphorylase"/>
    <property type="match status" value="1"/>
</dbReference>
<dbReference type="Gene3D" id="3.40.1390.20">
    <property type="entry name" value="HprK N-terminal domain-like"/>
    <property type="match status" value="1"/>
</dbReference>
<dbReference type="Gene3D" id="3.40.50.300">
    <property type="entry name" value="P-loop containing nucleotide triphosphate hydrolases"/>
    <property type="match status" value="1"/>
</dbReference>
<dbReference type="HAMAP" id="MF_01249">
    <property type="entry name" value="HPr_kinase"/>
    <property type="match status" value="1"/>
</dbReference>
<dbReference type="InterPro" id="IPR003755">
    <property type="entry name" value="HPr(Ser)_kin/Pase"/>
</dbReference>
<dbReference type="InterPro" id="IPR011104">
    <property type="entry name" value="Hpr_kin/Pase_C"/>
</dbReference>
<dbReference type="InterPro" id="IPR011126">
    <property type="entry name" value="Hpr_kin/Pase_Hpr_N"/>
</dbReference>
<dbReference type="InterPro" id="IPR027417">
    <property type="entry name" value="P-loop_NTPase"/>
</dbReference>
<dbReference type="InterPro" id="IPR028979">
    <property type="entry name" value="Ser_kin/Pase_Hpr-like_N_sf"/>
</dbReference>
<dbReference type="NCBIfam" id="TIGR00679">
    <property type="entry name" value="hpr-ser"/>
    <property type="match status" value="1"/>
</dbReference>
<dbReference type="PANTHER" id="PTHR30305:SF1">
    <property type="entry name" value="HPR KINASE_PHOSPHORYLASE"/>
    <property type="match status" value="1"/>
</dbReference>
<dbReference type="PANTHER" id="PTHR30305">
    <property type="entry name" value="PROTEIN YJDM-RELATED"/>
    <property type="match status" value="1"/>
</dbReference>
<dbReference type="Pfam" id="PF07475">
    <property type="entry name" value="Hpr_kinase_C"/>
    <property type="match status" value="1"/>
</dbReference>
<dbReference type="Pfam" id="PF02603">
    <property type="entry name" value="Hpr_kinase_N"/>
    <property type="match status" value="1"/>
</dbReference>
<dbReference type="SUPFAM" id="SSF75138">
    <property type="entry name" value="HprK N-terminal domain-like"/>
    <property type="match status" value="1"/>
</dbReference>
<dbReference type="SUPFAM" id="SSF53795">
    <property type="entry name" value="PEP carboxykinase-like"/>
    <property type="match status" value="1"/>
</dbReference>